<proteinExistence type="evidence at protein level"/>
<dbReference type="EMBL" id="AL590842">
    <property type="protein sequence ID" value="CAL19028.1"/>
    <property type="molecule type" value="Genomic_DNA"/>
</dbReference>
<dbReference type="EMBL" id="AE009952">
    <property type="protein sequence ID" value="AAM84192.1"/>
    <property type="molecule type" value="Genomic_DNA"/>
</dbReference>
<dbReference type="EMBL" id="AE017042">
    <property type="protein sequence ID" value="AAS60770.1"/>
    <property type="molecule type" value="Genomic_DNA"/>
</dbReference>
<dbReference type="PIR" id="AB0043">
    <property type="entry name" value="AB0043"/>
</dbReference>
<dbReference type="RefSeq" id="WP_002209122.1">
    <property type="nucleotide sequence ID" value="NZ_WUCM01000014.1"/>
</dbReference>
<dbReference type="RefSeq" id="YP_002345424.1">
    <property type="nucleotide sequence ID" value="NC_003143.1"/>
</dbReference>
<dbReference type="PDB" id="3GSD">
    <property type="method" value="X-ray"/>
    <property type="resolution" value="2.05 A"/>
    <property type="chains" value="A/B/C/D/E/F/G/H/I/J/K/L=1-119"/>
</dbReference>
<dbReference type="PDBsum" id="3GSD"/>
<dbReference type="SMR" id="Q74XD3"/>
<dbReference type="IntAct" id="Q74XD3">
    <property type="interactions" value="6"/>
</dbReference>
<dbReference type="STRING" id="214092.YPO0346"/>
<dbReference type="PaxDb" id="214092-YPO0346"/>
<dbReference type="DNASU" id="1145551"/>
<dbReference type="EnsemblBacteria" id="AAS60770">
    <property type="protein sequence ID" value="AAS60770"/>
    <property type="gene ID" value="YP_0500"/>
</dbReference>
<dbReference type="GeneID" id="57974262"/>
<dbReference type="KEGG" id="ype:YPO0346"/>
<dbReference type="KEGG" id="ypk:y0604"/>
<dbReference type="KEGG" id="ypm:YP_0500"/>
<dbReference type="PATRIC" id="fig|214092.21.peg.582"/>
<dbReference type="eggNOG" id="COG1324">
    <property type="taxonomic scope" value="Bacteria"/>
</dbReference>
<dbReference type="HOGENOM" id="CLU_098807_3_0_6"/>
<dbReference type="OMA" id="VYTTFPD"/>
<dbReference type="OrthoDB" id="37622at2"/>
<dbReference type="EvolutionaryTrace" id="Q74XD3"/>
<dbReference type="Proteomes" id="UP000000815">
    <property type="component" value="Chromosome"/>
</dbReference>
<dbReference type="Proteomes" id="UP000001019">
    <property type="component" value="Chromosome"/>
</dbReference>
<dbReference type="Proteomes" id="UP000002490">
    <property type="component" value="Chromosome"/>
</dbReference>
<dbReference type="GO" id="GO:0005737">
    <property type="term" value="C:cytoplasm"/>
    <property type="evidence" value="ECO:0007669"/>
    <property type="project" value="UniProtKB-SubCell"/>
</dbReference>
<dbReference type="GO" id="GO:0005507">
    <property type="term" value="F:copper ion binding"/>
    <property type="evidence" value="ECO:0000318"/>
    <property type="project" value="GO_Central"/>
</dbReference>
<dbReference type="GO" id="GO:0010038">
    <property type="term" value="P:response to metal ion"/>
    <property type="evidence" value="ECO:0007669"/>
    <property type="project" value="InterPro"/>
</dbReference>
<dbReference type="FunFam" id="3.30.70.120:FF:000004">
    <property type="entry name" value="Divalent-cation tolerance protein CutA"/>
    <property type="match status" value="1"/>
</dbReference>
<dbReference type="Gene3D" id="3.30.70.120">
    <property type="match status" value="1"/>
</dbReference>
<dbReference type="HAMAP" id="MF_01160">
    <property type="entry name" value="CutA"/>
    <property type="match status" value="1"/>
</dbReference>
<dbReference type="InterPro" id="IPR023700">
    <property type="entry name" value="CutA_Enterobact"/>
</dbReference>
<dbReference type="InterPro" id="IPR004323">
    <property type="entry name" value="Ion_tolerance_CutA"/>
</dbReference>
<dbReference type="InterPro" id="IPR011322">
    <property type="entry name" value="N-reg_PII-like_a/b"/>
</dbReference>
<dbReference type="InterPro" id="IPR015867">
    <property type="entry name" value="N-reg_PII/ATP_PRibTrfase_C"/>
</dbReference>
<dbReference type="NCBIfam" id="NF007930">
    <property type="entry name" value="PRK10645.1"/>
    <property type="match status" value="1"/>
</dbReference>
<dbReference type="PANTHER" id="PTHR23419">
    <property type="entry name" value="DIVALENT CATION TOLERANCE CUTA-RELATED"/>
    <property type="match status" value="1"/>
</dbReference>
<dbReference type="PANTHER" id="PTHR23419:SF8">
    <property type="entry name" value="FI09726P"/>
    <property type="match status" value="1"/>
</dbReference>
<dbReference type="Pfam" id="PF03091">
    <property type="entry name" value="CutA1"/>
    <property type="match status" value="1"/>
</dbReference>
<dbReference type="SUPFAM" id="SSF54913">
    <property type="entry name" value="GlnB-like"/>
    <property type="match status" value="1"/>
</dbReference>
<comment type="function">
    <text evidence="1">Involved in resistance toward heavy metals.</text>
</comment>
<comment type="cofactor">
    <cofactor evidence="1">
        <name>Cu cation</name>
        <dbReference type="ChEBI" id="CHEBI:23378"/>
    </cofactor>
    <text evidence="1">Binds 1 copper ion per subunit.</text>
</comment>
<comment type="subunit">
    <text evidence="1">Homotrimer.</text>
</comment>
<comment type="subcellular location">
    <subcellularLocation>
        <location evidence="1">Cytoplasm</location>
    </subcellularLocation>
</comment>
<comment type="similarity">
    <text evidence="1">Belongs to the CutA family.</text>
</comment>
<keyword id="KW-0002">3D-structure</keyword>
<keyword id="KW-0186">Copper</keyword>
<keyword id="KW-0963">Cytoplasm</keyword>
<keyword id="KW-0479">Metal-binding</keyword>
<keyword id="KW-1185">Reference proteome</keyword>
<accession>Q74XD3</accession>
<accession>Q0WJW4</accession>
<accession>Q7CKN0</accession>
<accession>Q8ZIY8</accession>
<sequence>MSDSDAMTDPNAVSYSNAIVVLCTAPDEASAQNLAAQVLGEKLAACVTLLPGATSLYYWEGKLEQEYEVQLLFKSNTDHQQALLTYIKQHHPYQTPELLVLPVRDGDKDYLSWLNASLL</sequence>
<reference key="1">
    <citation type="journal article" date="2001" name="Nature">
        <title>Genome sequence of Yersinia pestis, the causative agent of plague.</title>
        <authorList>
            <person name="Parkhill J."/>
            <person name="Wren B.W."/>
            <person name="Thomson N.R."/>
            <person name="Titball R.W."/>
            <person name="Holden M.T.G."/>
            <person name="Prentice M.B."/>
            <person name="Sebaihia M."/>
            <person name="James K.D."/>
            <person name="Churcher C.M."/>
            <person name="Mungall K.L."/>
            <person name="Baker S."/>
            <person name="Basham D."/>
            <person name="Bentley S.D."/>
            <person name="Brooks K."/>
            <person name="Cerdeno-Tarraga A.-M."/>
            <person name="Chillingworth T."/>
            <person name="Cronin A."/>
            <person name="Davies R.M."/>
            <person name="Davis P."/>
            <person name="Dougan G."/>
            <person name="Feltwell T."/>
            <person name="Hamlin N."/>
            <person name="Holroyd S."/>
            <person name="Jagels K."/>
            <person name="Karlyshev A.V."/>
            <person name="Leather S."/>
            <person name="Moule S."/>
            <person name="Oyston P.C.F."/>
            <person name="Quail M.A."/>
            <person name="Rutherford K.M."/>
            <person name="Simmonds M."/>
            <person name="Skelton J."/>
            <person name="Stevens K."/>
            <person name="Whitehead S."/>
            <person name="Barrell B.G."/>
        </authorList>
    </citation>
    <scope>NUCLEOTIDE SEQUENCE [LARGE SCALE GENOMIC DNA]</scope>
    <source>
        <strain>CO-92 / Biovar Orientalis</strain>
    </source>
</reference>
<reference key="2">
    <citation type="journal article" date="2002" name="J. Bacteriol.">
        <title>Genome sequence of Yersinia pestis KIM.</title>
        <authorList>
            <person name="Deng W."/>
            <person name="Burland V."/>
            <person name="Plunkett G. III"/>
            <person name="Boutin A."/>
            <person name="Mayhew G.F."/>
            <person name="Liss P."/>
            <person name="Perna N.T."/>
            <person name="Rose D.J."/>
            <person name="Mau B."/>
            <person name="Zhou S."/>
            <person name="Schwartz D.C."/>
            <person name="Fetherston J.D."/>
            <person name="Lindler L.E."/>
            <person name="Brubaker R.R."/>
            <person name="Plano G.V."/>
            <person name="Straley S.C."/>
            <person name="McDonough K.A."/>
            <person name="Nilles M.L."/>
            <person name="Matson J.S."/>
            <person name="Blattner F.R."/>
            <person name="Perry R.D."/>
        </authorList>
    </citation>
    <scope>NUCLEOTIDE SEQUENCE [LARGE SCALE GENOMIC DNA]</scope>
    <source>
        <strain>KIM10+ / Biovar Mediaevalis</strain>
    </source>
</reference>
<reference key="3">
    <citation type="journal article" date="2004" name="DNA Res.">
        <title>Complete genome sequence of Yersinia pestis strain 91001, an isolate avirulent to humans.</title>
        <authorList>
            <person name="Song Y."/>
            <person name="Tong Z."/>
            <person name="Wang J."/>
            <person name="Wang L."/>
            <person name="Guo Z."/>
            <person name="Han Y."/>
            <person name="Zhang J."/>
            <person name="Pei D."/>
            <person name="Zhou D."/>
            <person name="Qin H."/>
            <person name="Pang X."/>
            <person name="Han Y."/>
            <person name="Zhai J."/>
            <person name="Li M."/>
            <person name="Cui B."/>
            <person name="Qi Z."/>
            <person name="Jin L."/>
            <person name="Dai R."/>
            <person name="Chen F."/>
            <person name="Li S."/>
            <person name="Ye C."/>
            <person name="Du Z."/>
            <person name="Lin W."/>
            <person name="Wang J."/>
            <person name="Yu J."/>
            <person name="Yang H."/>
            <person name="Wang J."/>
            <person name="Huang P."/>
            <person name="Yang R."/>
        </authorList>
    </citation>
    <scope>NUCLEOTIDE SEQUENCE [LARGE SCALE GENOMIC DNA]</scope>
    <source>
        <strain>91001 / Biovar Mediaevalis</strain>
    </source>
</reference>
<evidence type="ECO:0000255" key="1">
    <source>
        <dbReference type="HAMAP-Rule" id="MF_01160"/>
    </source>
</evidence>
<evidence type="ECO:0007829" key="2">
    <source>
        <dbReference type="PDB" id="3GSD"/>
    </source>
</evidence>
<organism>
    <name type="scientific">Yersinia pestis</name>
    <dbReference type="NCBI Taxonomy" id="632"/>
    <lineage>
        <taxon>Bacteria</taxon>
        <taxon>Pseudomonadati</taxon>
        <taxon>Pseudomonadota</taxon>
        <taxon>Gammaproteobacteria</taxon>
        <taxon>Enterobacterales</taxon>
        <taxon>Yersiniaceae</taxon>
        <taxon>Yersinia</taxon>
    </lineage>
</organism>
<feature type="chain" id="PRO_0000157126" description="Divalent-cation tolerance protein CutA">
    <location>
        <begin position="1"/>
        <end position="119"/>
    </location>
</feature>
<feature type="binding site" evidence="1">
    <location>
        <position position="23"/>
    </location>
    <ligand>
        <name>Cu cation</name>
        <dbReference type="ChEBI" id="CHEBI:23378"/>
    </ligand>
</feature>
<feature type="binding site" evidence="1">
    <location>
        <position position="90"/>
    </location>
    <ligand>
        <name>Cu cation</name>
        <dbReference type="ChEBI" id="CHEBI:23378"/>
    </ligand>
</feature>
<feature type="binding site" evidence="1">
    <location>
        <position position="91"/>
    </location>
    <ligand>
        <name>Cu cation</name>
        <dbReference type="ChEBI" id="CHEBI:23378"/>
    </ligand>
</feature>
<feature type="strand" evidence="2">
    <location>
        <begin position="17"/>
        <end position="27"/>
    </location>
</feature>
<feature type="helix" evidence="2">
    <location>
        <begin position="28"/>
        <end position="40"/>
    </location>
</feature>
<feature type="strand" evidence="2">
    <location>
        <begin position="45"/>
        <end position="59"/>
    </location>
</feature>
<feature type="strand" evidence="2">
    <location>
        <begin position="62"/>
        <end position="76"/>
    </location>
</feature>
<feature type="helix" evidence="2">
    <location>
        <begin position="77"/>
        <end position="79"/>
    </location>
</feature>
<feature type="helix" evidence="2">
    <location>
        <begin position="80"/>
        <end position="89"/>
    </location>
</feature>
<feature type="strand" evidence="2">
    <location>
        <begin position="92"/>
        <end position="95"/>
    </location>
</feature>
<feature type="strand" evidence="2">
    <location>
        <begin position="99"/>
        <end position="102"/>
    </location>
</feature>
<feature type="helix" evidence="2">
    <location>
        <begin position="108"/>
        <end position="117"/>
    </location>
</feature>
<gene>
    <name evidence="1" type="primary">cutA</name>
    <name type="ordered locus">YPO0346</name>
    <name type="ordered locus">y0604</name>
    <name type="ordered locus">YP_0500</name>
</gene>
<protein>
    <recommendedName>
        <fullName evidence="1">Divalent-cation tolerance protein CutA</fullName>
    </recommendedName>
</protein>
<name>CUTA_YERPE</name>